<proteinExistence type="evidence at transcript level"/>
<sequence>MPTWMLLFCLLCVTSSNLSSALEDNCKTFSTTLPNMLRELRAAFSSVKTYFQTRDKLETKLIDKSLLEELKSYLGCQALSEMIKFYLEEVMPRAEENELDVKEDVGSLGEKLKALRLRLKRCHRFLPCEDNSRVVKQVRNTYKELQEQGVYKAMGDFDIFIGYMEEYLTMHIGK</sequence>
<organism>
    <name type="scientific">Trichosurus vulpecula</name>
    <name type="common">Brush-tailed possum</name>
    <dbReference type="NCBI Taxonomy" id="9337"/>
    <lineage>
        <taxon>Eukaryota</taxon>
        <taxon>Metazoa</taxon>
        <taxon>Chordata</taxon>
        <taxon>Craniata</taxon>
        <taxon>Vertebrata</taxon>
        <taxon>Euteleostomi</taxon>
        <taxon>Mammalia</taxon>
        <taxon>Metatheria</taxon>
        <taxon>Diprotodontia</taxon>
        <taxon>Phalangeridae</taxon>
        <taxon>Trichosurus</taxon>
    </lineage>
</organism>
<name>IL10_TRIVU</name>
<gene>
    <name type="primary">IL10</name>
</gene>
<comment type="function">
    <text evidence="2 3">Major immune regulatory cytokine that acts on many cells of the immune system where it has profound anti-inflammatory functions, limiting excessive tissue disruption caused by inflammation. Mechanistically, IL10 binds to its heterotetrameric receptor comprising IL10RA and IL10RB leading to JAK1 and STAT2-mediated phosphorylation of STAT3. In turn, STAT3 translocates to the nucleus where it drives expression of anti-inflammatory mediators. Targets antigen-presenting cells (APCs) such as macrophages and monocytes and inhibits their release of pro-inflammatory cytokines including granulocyte-macrophage colony-stimulating factor /GM-CSF, granulocyte colony-stimulating factor/G-CSF, IL-1 alpha, IL-1 beta, IL-6, IL-8 and TNF-alpha. Also interferes with antigen presentation by reducing the expression of MHC-class II and co-stimulatory molecules, thereby inhibiting their ability to induce T cell activation (By similarity). In addition, controls the inflammatory response of macrophages by reprogramming essential metabolic pathways including mTOR signaling (By similarity).</text>
</comment>
<comment type="subunit">
    <text evidence="3">Homodimer. Interacts with IL10RA and IL10RB.</text>
</comment>
<comment type="subcellular location">
    <subcellularLocation>
        <location evidence="3">Secreted</location>
    </subcellularLocation>
</comment>
<comment type="similarity">
    <text evidence="5">Belongs to the IL-10 family.</text>
</comment>
<keyword id="KW-0202">Cytokine</keyword>
<keyword id="KW-1015">Disulfide bond</keyword>
<keyword id="KW-0325">Glycoprotein</keyword>
<keyword id="KW-0964">Secreted</keyword>
<keyword id="KW-0732">Signal</keyword>
<evidence type="ECO:0000250" key="1"/>
<evidence type="ECO:0000250" key="2">
    <source>
        <dbReference type="UniProtKB" id="P18893"/>
    </source>
</evidence>
<evidence type="ECO:0000250" key="3">
    <source>
        <dbReference type="UniProtKB" id="P22301"/>
    </source>
</evidence>
<evidence type="ECO:0000255" key="4"/>
<evidence type="ECO:0000305" key="5"/>
<accession>O97798</accession>
<reference key="1">
    <citation type="journal article" date="1998" name="DNA Seq.">
        <title>Nucleotide sequence of a marsupial interleukin-10 cDNA from the Australian brushtail possum (Trichosurus vulpecula).</title>
        <authorList>
            <person name="Wedlock D.N."/>
            <person name="Aldwell F.E."/>
            <person name="Buddle B.M."/>
        </authorList>
    </citation>
    <scope>NUCLEOTIDE SEQUENCE [MRNA]</scope>
</reference>
<protein>
    <recommendedName>
        <fullName>Interleukin-10</fullName>
        <shortName>IL-10</shortName>
    </recommendedName>
    <alternativeName>
        <fullName>Cytokine synthesis inhibitory factor</fullName>
        <shortName>CSIF</shortName>
    </alternativeName>
</protein>
<feature type="signal peptide" evidence="4">
    <location>
        <begin position="1"/>
        <end position="16"/>
    </location>
</feature>
<feature type="chain" id="PRO_0000015374" description="Interleukin-10">
    <location>
        <begin position="17"/>
        <end position="174"/>
    </location>
</feature>
<feature type="glycosylation site" description="N-linked (GlcNAc...) asparagine" evidence="4">
    <location>
        <position position="17"/>
    </location>
</feature>
<feature type="disulfide bond" evidence="1">
    <location>
        <begin position="26"/>
        <end position="122"/>
    </location>
</feature>
<feature type="disulfide bond" evidence="1">
    <location>
        <begin position="76"/>
        <end position="128"/>
    </location>
</feature>
<dbReference type="EMBL" id="AF026277">
    <property type="protein sequence ID" value="AAD01799.1"/>
    <property type="molecule type" value="mRNA"/>
</dbReference>
<dbReference type="SMR" id="O97798"/>
<dbReference type="GlyCosmos" id="O97798">
    <property type="glycosylation" value="1 site, No reported glycans"/>
</dbReference>
<dbReference type="GO" id="GO:0005615">
    <property type="term" value="C:extracellular space"/>
    <property type="evidence" value="ECO:0007669"/>
    <property type="project" value="UniProtKB-KW"/>
</dbReference>
<dbReference type="GO" id="GO:0005125">
    <property type="term" value="F:cytokine activity"/>
    <property type="evidence" value="ECO:0007669"/>
    <property type="project" value="UniProtKB-KW"/>
</dbReference>
<dbReference type="GO" id="GO:0006955">
    <property type="term" value="P:immune response"/>
    <property type="evidence" value="ECO:0007669"/>
    <property type="project" value="InterPro"/>
</dbReference>
<dbReference type="GO" id="GO:0001817">
    <property type="term" value="P:regulation of cytokine production"/>
    <property type="evidence" value="ECO:0007669"/>
    <property type="project" value="UniProtKB-ARBA"/>
</dbReference>
<dbReference type="FunFam" id="1.20.1250.10:FF:000011">
    <property type="entry name" value="Interleukin-10"/>
    <property type="match status" value="1"/>
</dbReference>
<dbReference type="Gene3D" id="1.20.1250.10">
    <property type="match status" value="1"/>
</dbReference>
<dbReference type="InterPro" id="IPR009079">
    <property type="entry name" value="4_helix_cytokine-like_core"/>
</dbReference>
<dbReference type="InterPro" id="IPR000098">
    <property type="entry name" value="IL-10"/>
</dbReference>
<dbReference type="InterPro" id="IPR020443">
    <property type="entry name" value="IL-10/19/20/24/26"/>
</dbReference>
<dbReference type="InterPro" id="IPR020423">
    <property type="entry name" value="IL-10_CS"/>
</dbReference>
<dbReference type="PANTHER" id="PTHR48482:SF5">
    <property type="entry name" value="INTERLEUKIN-10"/>
    <property type="match status" value="1"/>
</dbReference>
<dbReference type="PANTHER" id="PTHR48482">
    <property type="entry name" value="INTERLEUKIN-19-RELATED"/>
    <property type="match status" value="1"/>
</dbReference>
<dbReference type="Pfam" id="PF00726">
    <property type="entry name" value="IL10"/>
    <property type="match status" value="1"/>
</dbReference>
<dbReference type="PRINTS" id="PR01294">
    <property type="entry name" value="INTRLEUKIN10"/>
</dbReference>
<dbReference type="SMART" id="SM00188">
    <property type="entry name" value="IL10"/>
    <property type="match status" value="1"/>
</dbReference>
<dbReference type="SUPFAM" id="SSF47266">
    <property type="entry name" value="4-helical cytokines"/>
    <property type="match status" value="1"/>
</dbReference>
<dbReference type="PROSITE" id="PS00520">
    <property type="entry name" value="INTERLEUKIN_10"/>
    <property type="match status" value="1"/>
</dbReference>